<comment type="function">
    <text evidence="1">Catalyzes the reversible interconversion of serine and glycine with tetrahydrofolate (THF) serving as the one-carbon carrier. Also exhibits THF-independent aldolase activity toward beta-hydroxyamino acids, producing glycine and aldehydes, via a retro-aldol mechanism.</text>
</comment>
<comment type="catalytic activity">
    <reaction evidence="1">
        <text>(6R)-5,10-methylene-5,6,7,8-tetrahydrofolate + glycine + H2O = (6S)-5,6,7,8-tetrahydrofolate + L-serine</text>
        <dbReference type="Rhea" id="RHEA:15481"/>
        <dbReference type="ChEBI" id="CHEBI:15377"/>
        <dbReference type="ChEBI" id="CHEBI:15636"/>
        <dbReference type="ChEBI" id="CHEBI:33384"/>
        <dbReference type="ChEBI" id="CHEBI:57305"/>
        <dbReference type="ChEBI" id="CHEBI:57453"/>
        <dbReference type="EC" id="2.1.2.1"/>
    </reaction>
</comment>
<comment type="cofactor">
    <cofactor evidence="1">
        <name>pyridoxal 5'-phosphate</name>
        <dbReference type="ChEBI" id="CHEBI:597326"/>
    </cofactor>
</comment>
<comment type="pathway">
    <text evidence="1">One-carbon metabolism; tetrahydrofolate interconversion.</text>
</comment>
<comment type="pathway">
    <text evidence="1">Amino-acid biosynthesis; glycine biosynthesis; glycine from L-serine: step 1/1.</text>
</comment>
<comment type="subunit">
    <text evidence="1">Homodimer.</text>
</comment>
<comment type="subcellular location">
    <subcellularLocation>
        <location evidence="1">Cytoplasm</location>
    </subcellularLocation>
</comment>
<comment type="similarity">
    <text evidence="1">Belongs to the SHMT family.</text>
</comment>
<proteinExistence type="inferred from homology"/>
<gene>
    <name evidence="1" type="primary">glyA</name>
    <name type="ordered locus">NP_2050A</name>
</gene>
<sequence>MNYEQVREADPAIAAALADERDRQEDTLAMIASENHVSEAVLQAQSSELTNKYAEGYPGERYYAGCGPADDVEELAIERAEELWGAEHINVQPHSGTQANMAVYLAMLEPGDRILSLELEHGGHLSHGHPANFTGQTYEVEQYEVDPETGYIDYDELHEQAEAFEPDIIVSGYSAYPREVEFERIQEAADAVDAYHLADIAHITGLVAAGVHQSPVGVADFVTGSTHKTIRAGRGGIVMCDEEYADDIDAAVFPGAQGGPLMHNVAGKAVGFKEALQPEFEQYAQQVIDNAEALGERLQEHGFSLVSGGTDNHLVLVDLRESHPDTSGTVAEEALEAAGIVLNKNTVPGETRSAFNPSGIRAGTPALTTRGFDEQACERVADIIANVIDNPDDEGTIDEAAAEVDALCEEYPLYQGESGITDFE</sequence>
<evidence type="ECO:0000255" key="1">
    <source>
        <dbReference type="HAMAP-Rule" id="MF_00051"/>
    </source>
</evidence>
<reference key="1">
    <citation type="journal article" date="2005" name="Genome Res.">
        <title>Living with two extremes: conclusions from the genome sequence of Natronomonas pharaonis.</title>
        <authorList>
            <person name="Falb M."/>
            <person name="Pfeiffer F."/>
            <person name="Palm P."/>
            <person name="Rodewald K."/>
            <person name="Hickmann V."/>
            <person name="Tittor J."/>
            <person name="Oesterhelt D."/>
        </authorList>
    </citation>
    <scope>NUCLEOTIDE SEQUENCE [LARGE SCALE GENOMIC DNA]</scope>
    <source>
        <strain>ATCC 35678 / DSM 2160 / CIP 103997 / JCM 8858 / NBRC 14720 / NCIMB 2260 / Gabara</strain>
    </source>
</reference>
<name>GLYA_NATPD</name>
<feature type="chain" id="PRO_0000235056" description="Serine hydroxymethyltransferase">
    <location>
        <begin position="1"/>
        <end position="424"/>
    </location>
</feature>
<feature type="binding site" evidence="1">
    <location>
        <position position="119"/>
    </location>
    <ligand>
        <name>(6S)-5,6,7,8-tetrahydrofolate</name>
        <dbReference type="ChEBI" id="CHEBI:57453"/>
    </ligand>
</feature>
<feature type="binding site" evidence="1">
    <location>
        <begin position="123"/>
        <end position="125"/>
    </location>
    <ligand>
        <name>(6S)-5,6,7,8-tetrahydrofolate</name>
        <dbReference type="ChEBI" id="CHEBI:57453"/>
    </ligand>
</feature>
<feature type="binding site" evidence="1">
    <location>
        <begin position="353"/>
        <end position="355"/>
    </location>
    <ligand>
        <name>(6S)-5,6,7,8-tetrahydrofolate</name>
        <dbReference type="ChEBI" id="CHEBI:57453"/>
    </ligand>
</feature>
<feature type="site" description="Plays an important role in substrate specificity" evidence="1">
    <location>
        <position position="227"/>
    </location>
</feature>
<feature type="modified residue" description="N6-(pyridoxal phosphate)lysine" evidence="1">
    <location>
        <position position="228"/>
    </location>
</feature>
<dbReference type="EC" id="2.1.2.1" evidence="1"/>
<dbReference type="EMBL" id="CR936257">
    <property type="protein sequence ID" value="CAI49116.1"/>
    <property type="molecule type" value="Genomic_DNA"/>
</dbReference>
<dbReference type="RefSeq" id="WP_011322745.1">
    <property type="nucleotide sequence ID" value="NC_007426.1"/>
</dbReference>
<dbReference type="SMR" id="Q3IRX5"/>
<dbReference type="STRING" id="348780.NP_2050A"/>
<dbReference type="EnsemblBacteria" id="CAI49116">
    <property type="protein sequence ID" value="CAI49116"/>
    <property type="gene ID" value="NP_2050A"/>
</dbReference>
<dbReference type="GeneID" id="3702765"/>
<dbReference type="KEGG" id="nph:NP_2050A"/>
<dbReference type="eggNOG" id="arCOG00070">
    <property type="taxonomic scope" value="Archaea"/>
</dbReference>
<dbReference type="HOGENOM" id="CLU_022477_2_1_2"/>
<dbReference type="OrthoDB" id="5821at2157"/>
<dbReference type="UniPathway" id="UPA00193"/>
<dbReference type="UniPathway" id="UPA00288">
    <property type="reaction ID" value="UER01023"/>
</dbReference>
<dbReference type="Proteomes" id="UP000002698">
    <property type="component" value="Chromosome"/>
</dbReference>
<dbReference type="GO" id="GO:0005737">
    <property type="term" value="C:cytoplasm"/>
    <property type="evidence" value="ECO:0007669"/>
    <property type="project" value="UniProtKB-SubCell"/>
</dbReference>
<dbReference type="GO" id="GO:0004372">
    <property type="term" value="F:glycine hydroxymethyltransferase activity"/>
    <property type="evidence" value="ECO:0007669"/>
    <property type="project" value="UniProtKB-UniRule"/>
</dbReference>
<dbReference type="GO" id="GO:0030170">
    <property type="term" value="F:pyridoxal phosphate binding"/>
    <property type="evidence" value="ECO:0007669"/>
    <property type="project" value="UniProtKB-UniRule"/>
</dbReference>
<dbReference type="GO" id="GO:0019264">
    <property type="term" value="P:glycine biosynthetic process from serine"/>
    <property type="evidence" value="ECO:0007669"/>
    <property type="project" value="UniProtKB-UniRule"/>
</dbReference>
<dbReference type="GO" id="GO:0035999">
    <property type="term" value="P:tetrahydrofolate interconversion"/>
    <property type="evidence" value="ECO:0007669"/>
    <property type="project" value="UniProtKB-UniRule"/>
</dbReference>
<dbReference type="CDD" id="cd00378">
    <property type="entry name" value="SHMT"/>
    <property type="match status" value="1"/>
</dbReference>
<dbReference type="FunFam" id="3.40.640.10:FF:000001">
    <property type="entry name" value="Serine hydroxymethyltransferase"/>
    <property type="match status" value="1"/>
</dbReference>
<dbReference type="Gene3D" id="3.90.1150.10">
    <property type="entry name" value="Aspartate Aminotransferase, domain 1"/>
    <property type="match status" value="1"/>
</dbReference>
<dbReference type="Gene3D" id="3.40.640.10">
    <property type="entry name" value="Type I PLP-dependent aspartate aminotransferase-like (Major domain)"/>
    <property type="match status" value="1"/>
</dbReference>
<dbReference type="HAMAP" id="MF_00051">
    <property type="entry name" value="SHMT"/>
    <property type="match status" value="1"/>
</dbReference>
<dbReference type="InterPro" id="IPR015424">
    <property type="entry name" value="PyrdxlP-dep_Trfase"/>
</dbReference>
<dbReference type="InterPro" id="IPR015421">
    <property type="entry name" value="PyrdxlP-dep_Trfase_major"/>
</dbReference>
<dbReference type="InterPro" id="IPR015422">
    <property type="entry name" value="PyrdxlP-dep_Trfase_small"/>
</dbReference>
<dbReference type="InterPro" id="IPR001085">
    <property type="entry name" value="Ser_HO-MeTrfase"/>
</dbReference>
<dbReference type="InterPro" id="IPR049943">
    <property type="entry name" value="Ser_HO-MeTrfase-like"/>
</dbReference>
<dbReference type="InterPro" id="IPR019798">
    <property type="entry name" value="Ser_HO-MeTrfase_PLP_BS"/>
</dbReference>
<dbReference type="InterPro" id="IPR039429">
    <property type="entry name" value="SHMT-like_dom"/>
</dbReference>
<dbReference type="NCBIfam" id="NF000586">
    <property type="entry name" value="PRK00011.1"/>
    <property type="match status" value="1"/>
</dbReference>
<dbReference type="PANTHER" id="PTHR11680">
    <property type="entry name" value="SERINE HYDROXYMETHYLTRANSFERASE"/>
    <property type="match status" value="1"/>
</dbReference>
<dbReference type="PANTHER" id="PTHR11680:SF35">
    <property type="entry name" value="SERINE HYDROXYMETHYLTRANSFERASE 1"/>
    <property type="match status" value="1"/>
</dbReference>
<dbReference type="Pfam" id="PF00464">
    <property type="entry name" value="SHMT"/>
    <property type="match status" value="1"/>
</dbReference>
<dbReference type="PIRSF" id="PIRSF000412">
    <property type="entry name" value="SHMT"/>
    <property type="match status" value="1"/>
</dbReference>
<dbReference type="SUPFAM" id="SSF53383">
    <property type="entry name" value="PLP-dependent transferases"/>
    <property type="match status" value="1"/>
</dbReference>
<dbReference type="PROSITE" id="PS00096">
    <property type="entry name" value="SHMT"/>
    <property type="match status" value="1"/>
</dbReference>
<keyword id="KW-0028">Amino-acid biosynthesis</keyword>
<keyword id="KW-0963">Cytoplasm</keyword>
<keyword id="KW-0554">One-carbon metabolism</keyword>
<keyword id="KW-0663">Pyridoxal phosphate</keyword>
<keyword id="KW-1185">Reference proteome</keyword>
<keyword id="KW-0808">Transferase</keyword>
<protein>
    <recommendedName>
        <fullName evidence="1">Serine hydroxymethyltransferase</fullName>
        <shortName evidence="1">SHMT</shortName>
        <shortName evidence="1">Serine methylase</shortName>
        <ecNumber evidence="1">2.1.2.1</ecNumber>
    </recommendedName>
</protein>
<organism>
    <name type="scientific">Natronomonas pharaonis (strain ATCC 35678 / DSM 2160 / CIP 103997 / JCM 8858 / NBRC 14720 / NCIMB 2260 / Gabara)</name>
    <name type="common">Halobacterium pharaonis</name>
    <dbReference type="NCBI Taxonomy" id="348780"/>
    <lineage>
        <taxon>Archaea</taxon>
        <taxon>Methanobacteriati</taxon>
        <taxon>Methanobacteriota</taxon>
        <taxon>Stenosarchaea group</taxon>
        <taxon>Halobacteria</taxon>
        <taxon>Halobacteriales</taxon>
        <taxon>Haloarculaceae</taxon>
        <taxon>Natronomonas</taxon>
    </lineage>
</organism>
<accession>Q3IRX5</accession>